<sequence>MENSQLCKLFIGGLNVQTSESGLRGHFEAFGTLTDCVVVVNPQTKRSRCFGFVTYSNVEEADAAMAASPHAVDGNTVELKRAVSREDSARPGAHAKVKKLFVGGLKGDVAEGDLIEHFSQFGTVEKAEIIADKQSGKKRGFGFVYFQNHDAADKAAVVKFHPIQGHRVEVKKAVPKEDIYSGGGGGGSRSSRGGRGGRGRGGGRDQNGLSKGGGGGYNSYGGYGGGGGGGYNAYGGGGGGSSYGGSDYGNGFGGFGSYSQHQSSYGPMKSGGGGGGGGSSWGGRSNSGPYRGGYGGGGGYGGSSF</sequence>
<dbReference type="EMBL" id="U23803">
    <property type="protein sequence ID" value="AAA65094.1"/>
    <property type="molecule type" value="mRNA"/>
</dbReference>
<dbReference type="EMBL" id="CR456986">
    <property type="protein sequence ID" value="CAG33267.1"/>
    <property type="molecule type" value="mRNA"/>
</dbReference>
<dbReference type="EMBL" id="CH471062">
    <property type="protein sequence ID" value="EAW62182.1"/>
    <property type="molecule type" value="Genomic_DNA"/>
</dbReference>
<dbReference type="EMBL" id="BC001008">
    <property type="protein sequence ID" value="AAH01008.1"/>
    <property type="molecule type" value="mRNA"/>
</dbReference>
<dbReference type="EMBL" id="BC007271">
    <property type="protein sequence ID" value="AAH07271.1"/>
    <property type="molecule type" value="mRNA"/>
</dbReference>
<dbReference type="EMBL" id="BC009284">
    <property type="protein sequence ID" value="AAH09284.1"/>
    <property type="molecule type" value="mRNA"/>
</dbReference>
<dbReference type="EMBL" id="BC011972">
    <property type="protein sequence ID" value="AAH11972.1"/>
    <property type="molecule type" value="mRNA"/>
</dbReference>
<dbReference type="EMBL" id="BC012980">
    <property type="protein sequence ID" value="AAH12980.1"/>
    <property type="molecule type" value="mRNA"/>
</dbReference>
<dbReference type="EMBL" id="BC018949">
    <property type="protein sequence ID" value="AAH18949.1"/>
    <property type="molecule type" value="mRNA"/>
</dbReference>
<dbReference type="EMBL" id="BC019271">
    <property type="protein sequence ID" value="AAH19271.1"/>
    <property type="molecule type" value="mRNA"/>
</dbReference>
<dbReference type="EMBL" id="BC028976">
    <property type="protein sequence ID" value="AAH28976.1"/>
    <property type="molecule type" value="mRNA"/>
</dbReference>
<dbReference type="EMBL" id="BC030249">
    <property type="protein sequence ID" value="AAH30249.1"/>
    <property type="molecule type" value="mRNA"/>
</dbReference>
<dbReference type="CCDS" id="CCDS4193.1"/>
<dbReference type="RefSeq" id="NP_006796.1">
    <property type="nucleotide sequence ID" value="NM_006805.4"/>
</dbReference>
<dbReference type="SMR" id="Q13151"/>
<dbReference type="BioGRID" id="116149">
    <property type="interactions" value="362"/>
</dbReference>
<dbReference type="CORUM" id="Q13151"/>
<dbReference type="FunCoup" id="Q13151">
    <property type="interactions" value="2751"/>
</dbReference>
<dbReference type="IntAct" id="Q13151">
    <property type="interactions" value="137"/>
</dbReference>
<dbReference type="MINT" id="Q13151"/>
<dbReference type="STRING" id="9606.ENSP00000316042"/>
<dbReference type="GlyCosmos" id="Q13151">
    <property type="glycosylation" value="2 sites, 2 glycans"/>
</dbReference>
<dbReference type="GlyGen" id="Q13151">
    <property type="glycosylation" value="2 sites, 2 O-linked glycans (2 sites)"/>
</dbReference>
<dbReference type="iPTMnet" id="Q13151"/>
<dbReference type="PhosphoSitePlus" id="Q13151"/>
<dbReference type="SwissPalm" id="Q13151"/>
<dbReference type="BioMuta" id="HNRNPA0"/>
<dbReference type="DMDM" id="8134660"/>
<dbReference type="REPRODUCTION-2DPAGE" id="Q13151"/>
<dbReference type="jPOST" id="Q13151"/>
<dbReference type="MassIVE" id="Q13151"/>
<dbReference type="PaxDb" id="9606-ENSP00000316042"/>
<dbReference type="PeptideAtlas" id="Q13151"/>
<dbReference type="ProteomicsDB" id="59192"/>
<dbReference type="Pumba" id="Q13151"/>
<dbReference type="Antibodypedia" id="14786">
    <property type="antibodies" value="176 antibodies from 30 providers"/>
</dbReference>
<dbReference type="DNASU" id="10949"/>
<dbReference type="Ensembl" id="ENST00000314940.7">
    <property type="protein sequence ID" value="ENSP00000316042.4"/>
    <property type="gene ID" value="ENSG00000177733.8"/>
</dbReference>
<dbReference type="GeneID" id="10949"/>
<dbReference type="KEGG" id="hsa:10949"/>
<dbReference type="MANE-Select" id="ENST00000314940.7">
    <property type="protein sequence ID" value="ENSP00000316042.4"/>
    <property type="RefSeq nucleotide sequence ID" value="NM_006805.4"/>
    <property type="RefSeq protein sequence ID" value="NP_006796.1"/>
</dbReference>
<dbReference type="UCSC" id="uc003lbt.4">
    <property type="organism name" value="human"/>
</dbReference>
<dbReference type="AGR" id="HGNC:5030"/>
<dbReference type="CTD" id="10949"/>
<dbReference type="DisGeNET" id="10949"/>
<dbReference type="GeneCards" id="HNRNPA0"/>
<dbReference type="HGNC" id="HGNC:5030">
    <property type="gene designation" value="HNRNPA0"/>
</dbReference>
<dbReference type="HPA" id="ENSG00000177733">
    <property type="expression patterns" value="Low tissue specificity"/>
</dbReference>
<dbReference type="MIM" id="609409">
    <property type="type" value="gene"/>
</dbReference>
<dbReference type="neXtProt" id="NX_Q13151"/>
<dbReference type="OpenTargets" id="ENSG00000177733"/>
<dbReference type="PharmGKB" id="PA162391106"/>
<dbReference type="VEuPathDB" id="HostDB:ENSG00000177733"/>
<dbReference type="eggNOG" id="KOG0118">
    <property type="taxonomic scope" value="Eukaryota"/>
</dbReference>
<dbReference type="GeneTree" id="ENSGT00940000154808"/>
<dbReference type="HOGENOM" id="CLU_012062_1_4_1"/>
<dbReference type="InParanoid" id="Q13151"/>
<dbReference type="OMA" id="RYGSYMG"/>
<dbReference type="OrthoDB" id="1875751at2759"/>
<dbReference type="PAN-GO" id="Q13151">
    <property type="GO annotations" value="3 GO annotations based on evolutionary models"/>
</dbReference>
<dbReference type="PhylomeDB" id="Q13151"/>
<dbReference type="TreeFam" id="TF351342"/>
<dbReference type="PathwayCommons" id="Q13151"/>
<dbReference type="SignaLink" id="Q13151"/>
<dbReference type="SIGNOR" id="Q13151"/>
<dbReference type="BioGRID-ORCS" id="10949">
    <property type="hits" value="59 hits in 1154 CRISPR screens"/>
</dbReference>
<dbReference type="CD-CODE" id="0B6FB1B0">
    <property type="entry name" value="Synthetic Condensate 000115"/>
</dbReference>
<dbReference type="CD-CODE" id="232F8A39">
    <property type="entry name" value="P-body"/>
</dbReference>
<dbReference type="CD-CODE" id="91857CE7">
    <property type="entry name" value="Nucleolus"/>
</dbReference>
<dbReference type="CD-CODE" id="DEE660B4">
    <property type="entry name" value="Stress granule"/>
</dbReference>
<dbReference type="ChiTaRS" id="HNRNPA0">
    <property type="organism name" value="human"/>
</dbReference>
<dbReference type="GeneWiki" id="HNRNPA0"/>
<dbReference type="GenomeRNAi" id="10949"/>
<dbReference type="Pharos" id="Q13151">
    <property type="development level" value="Tbio"/>
</dbReference>
<dbReference type="PRO" id="PR:Q13151"/>
<dbReference type="Proteomes" id="UP000005640">
    <property type="component" value="Chromosome 5"/>
</dbReference>
<dbReference type="RNAct" id="Q13151">
    <property type="molecule type" value="protein"/>
</dbReference>
<dbReference type="Bgee" id="ENSG00000177733">
    <property type="expression patterns" value="Expressed in adult organism and 214 other cell types or tissues"/>
</dbReference>
<dbReference type="GO" id="GO:0005654">
    <property type="term" value="C:nucleoplasm"/>
    <property type="evidence" value="ECO:0000314"/>
    <property type="project" value="HPA"/>
</dbReference>
<dbReference type="GO" id="GO:0005634">
    <property type="term" value="C:nucleus"/>
    <property type="evidence" value="ECO:0000318"/>
    <property type="project" value="GO_Central"/>
</dbReference>
<dbReference type="GO" id="GO:1990904">
    <property type="term" value="C:ribonucleoprotein complex"/>
    <property type="evidence" value="ECO:0007669"/>
    <property type="project" value="UniProtKB-KW"/>
</dbReference>
<dbReference type="GO" id="GO:0045202">
    <property type="term" value="C:synapse"/>
    <property type="evidence" value="ECO:0007669"/>
    <property type="project" value="Ensembl"/>
</dbReference>
<dbReference type="GO" id="GO:0035925">
    <property type="term" value="F:mRNA 3'-UTR AU-rich region binding"/>
    <property type="evidence" value="ECO:0000314"/>
    <property type="project" value="GO_Central"/>
</dbReference>
<dbReference type="GO" id="GO:0003729">
    <property type="term" value="F:mRNA binding"/>
    <property type="evidence" value="ECO:0000318"/>
    <property type="project" value="GO_Central"/>
</dbReference>
<dbReference type="GO" id="GO:0019901">
    <property type="term" value="F:protein kinase binding"/>
    <property type="evidence" value="ECO:0000353"/>
    <property type="project" value="UniProtKB"/>
</dbReference>
<dbReference type="GO" id="GO:0003723">
    <property type="term" value="F:RNA binding"/>
    <property type="evidence" value="ECO:0007005"/>
    <property type="project" value="UniProtKB"/>
</dbReference>
<dbReference type="GO" id="GO:0070935">
    <property type="term" value="P:3'-UTR-mediated mRNA stabilization"/>
    <property type="evidence" value="ECO:0000250"/>
    <property type="project" value="UniProtKB"/>
</dbReference>
<dbReference type="GO" id="GO:0006954">
    <property type="term" value="P:inflammatory response"/>
    <property type="evidence" value="ECO:0000250"/>
    <property type="project" value="UniProtKB"/>
</dbReference>
<dbReference type="GO" id="GO:0006397">
    <property type="term" value="P:mRNA processing"/>
    <property type="evidence" value="ECO:0000304"/>
    <property type="project" value="ProtInc"/>
</dbReference>
<dbReference type="GO" id="GO:0032496">
    <property type="term" value="P:response to lipopolysaccharide"/>
    <property type="evidence" value="ECO:0000250"/>
    <property type="project" value="UniProtKB"/>
</dbReference>
<dbReference type="CDD" id="cd12326">
    <property type="entry name" value="RRM1_hnRNPA0"/>
    <property type="match status" value="1"/>
</dbReference>
<dbReference type="CDD" id="cd12579">
    <property type="entry name" value="RRM2_hnRNPA0"/>
    <property type="match status" value="1"/>
</dbReference>
<dbReference type="FunFam" id="3.30.70.330:FF:000581">
    <property type="entry name" value="Heterogeneous nuclear ribonucleoprotein A0"/>
    <property type="match status" value="1"/>
</dbReference>
<dbReference type="FunFam" id="3.30.70.330:FF:000040">
    <property type="entry name" value="Heterogeneous nuclear ribonucleoprotein A2/B1"/>
    <property type="match status" value="1"/>
</dbReference>
<dbReference type="Gene3D" id="3.30.70.330">
    <property type="match status" value="2"/>
</dbReference>
<dbReference type="InterPro" id="IPR034801">
    <property type="entry name" value="hnRNPA0_RRM1"/>
</dbReference>
<dbReference type="InterPro" id="IPR012677">
    <property type="entry name" value="Nucleotide-bd_a/b_plait_sf"/>
</dbReference>
<dbReference type="InterPro" id="IPR035979">
    <property type="entry name" value="RBD_domain_sf"/>
</dbReference>
<dbReference type="InterPro" id="IPR000504">
    <property type="entry name" value="RRM_dom"/>
</dbReference>
<dbReference type="PANTHER" id="PTHR48026:SF28">
    <property type="entry name" value="HETEROGENEOUS NUCLEAR RIBONUCLEOPROTEIN A0,-LIKE"/>
    <property type="match status" value="1"/>
</dbReference>
<dbReference type="PANTHER" id="PTHR48026">
    <property type="entry name" value="HOMOLOGOUS TO DROSOPHILA SQD (SQUID) PROTEIN"/>
    <property type="match status" value="1"/>
</dbReference>
<dbReference type="Pfam" id="PF00076">
    <property type="entry name" value="RRM_1"/>
    <property type="match status" value="2"/>
</dbReference>
<dbReference type="SMART" id="SM00360">
    <property type="entry name" value="RRM"/>
    <property type="match status" value="2"/>
</dbReference>
<dbReference type="SUPFAM" id="SSF54928">
    <property type="entry name" value="RNA-binding domain, RBD"/>
    <property type="match status" value="2"/>
</dbReference>
<dbReference type="PROSITE" id="PS50102">
    <property type="entry name" value="RRM"/>
    <property type="match status" value="2"/>
</dbReference>
<keyword id="KW-0007">Acetylation</keyword>
<keyword id="KW-0903">Direct protein sequencing</keyword>
<keyword id="KW-1017">Isopeptide bond</keyword>
<keyword id="KW-0488">Methylation</keyword>
<keyword id="KW-0539">Nucleus</keyword>
<keyword id="KW-0597">Phosphoprotein</keyword>
<keyword id="KW-1267">Proteomics identification</keyword>
<keyword id="KW-1185">Reference proteome</keyword>
<keyword id="KW-0677">Repeat</keyword>
<keyword id="KW-0687">Ribonucleoprotein</keyword>
<keyword id="KW-0694">RNA-binding</keyword>
<keyword id="KW-0832">Ubl conjugation</keyword>
<name>ROA0_HUMAN</name>
<comment type="function">
    <text evidence="5">mRNA-binding component of ribonucleosomes. Specifically binds AU-rich element (ARE)-containing mRNAs. Involved in post-transcriptional regulation of cytokines mRNAs.</text>
</comment>
<comment type="interaction">
    <interactant intactId="EBI-724092">
        <id>Q13151</id>
    </interactant>
    <interactant intactId="EBI-299649">
        <id>P22626</id>
        <label>HNRNPA2B1</label>
    </interactant>
    <organismsDiffer>false</organismsDiffer>
    <experiments>2</experiments>
</comment>
<comment type="interaction">
    <interactant intactId="EBI-724092">
        <id>Q13151</id>
    </interactant>
    <interactant intactId="EBI-286693">
        <id>Q92973</id>
        <label>TNPO1</label>
    </interactant>
    <organismsDiffer>false</organismsDiffer>
    <experiments>2</experiments>
</comment>
<comment type="subcellular location">
    <subcellularLocation>
        <location evidence="1">Nucleus</location>
    </subcellularLocation>
    <text evidence="1">Component of ribonucleosomes.</text>
</comment>
<comment type="PTM">
    <text evidence="6">Phosphorylated at Ser-84 by MAPKAPK2 in response to LPS treatment, promoting stabilization of GADD45A mRNA.</text>
</comment>
<comment type="PTM">
    <text>Arg-291 is dimethylated, probably to asymmetric dimethylarginine.</text>
</comment>
<organism>
    <name type="scientific">Homo sapiens</name>
    <name type="common">Human</name>
    <dbReference type="NCBI Taxonomy" id="9606"/>
    <lineage>
        <taxon>Eukaryota</taxon>
        <taxon>Metazoa</taxon>
        <taxon>Chordata</taxon>
        <taxon>Craniata</taxon>
        <taxon>Vertebrata</taxon>
        <taxon>Euteleostomi</taxon>
        <taxon>Mammalia</taxon>
        <taxon>Eutheria</taxon>
        <taxon>Euarchontoglires</taxon>
        <taxon>Primates</taxon>
        <taxon>Haplorrhini</taxon>
        <taxon>Catarrhini</taxon>
        <taxon>Hominidae</taxon>
        <taxon>Homo</taxon>
    </lineage>
</organism>
<reference key="1">
    <citation type="journal article" date="1995" name="RNA">
        <title>Isolation and characterization of a novel, low abundance hnRNP protein: A0.</title>
        <authorList>
            <person name="Myer V.E."/>
            <person name="Steitz J.A."/>
        </authorList>
    </citation>
    <scope>NUCLEOTIDE SEQUENCE [MRNA]</scope>
    <scope>PROTEIN SEQUENCE OF 143-154 AND 287-305</scope>
    <source>
        <tissue>Placenta</tissue>
    </source>
</reference>
<reference key="2">
    <citation type="submission" date="2004-06" db="EMBL/GenBank/DDBJ databases">
        <title>Cloning of human full open reading frames in Gateway(TM) system entry vector (pDONR201).</title>
        <authorList>
            <person name="Ebert L."/>
            <person name="Schick M."/>
            <person name="Neubert P."/>
            <person name="Schatten R."/>
            <person name="Henze S."/>
            <person name="Korn B."/>
        </authorList>
    </citation>
    <scope>NUCLEOTIDE SEQUENCE [LARGE SCALE MRNA]</scope>
</reference>
<reference key="3">
    <citation type="submission" date="2005-09" db="EMBL/GenBank/DDBJ databases">
        <authorList>
            <person name="Mural R.J."/>
            <person name="Istrail S."/>
            <person name="Sutton G.G."/>
            <person name="Florea L."/>
            <person name="Halpern A.L."/>
            <person name="Mobarry C.M."/>
            <person name="Lippert R."/>
            <person name="Walenz B."/>
            <person name="Shatkay H."/>
            <person name="Dew I."/>
            <person name="Miller J.R."/>
            <person name="Flanigan M.J."/>
            <person name="Edwards N.J."/>
            <person name="Bolanos R."/>
            <person name="Fasulo D."/>
            <person name="Halldorsson B.V."/>
            <person name="Hannenhalli S."/>
            <person name="Turner R."/>
            <person name="Yooseph S."/>
            <person name="Lu F."/>
            <person name="Nusskern D.R."/>
            <person name="Shue B.C."/>
            <person name="Zheng X.H."/>
            <person name="Zhong F."/>
            <person name="Delcher A.L."/>
            <person name="Huson D.H."/>
            <person name="Kravitz S.A."/>
            <person name="Mouchard L."/>
            <person name="Reinert K."/>
            <person name="Remington K.A."/>
            <person name="Clark A.G."/>
            <person name="Waterman M.S."/>
            <person name="Eichler E.E."/>
            <person name="Adams M.D."/>
            <person name="Hunkapiller M.W."/>
            <person name="Myers E.W."/>
            <person name="Venter J.C."/>
        </authorList>
    </citation>
    <scope>NUCLEOTIDE SEQUENCE [LARGE SCALE GENOMIC DNA]</scope>
</reference>
<reference key="4">
    <citation type="journal article" date="2004" name="Genome Res.">
        <title>The status, quality, and expansion of the NIH full-length cDNA project: the Mammalian Gene Collection (MGC).</title>
        <authorList>
            <consortium name="The MGC Project Team"/>
        </authorList>
    </citation>
    <scope>NUCLEOTIDE SEQUENCE [LARGE SCALE MRNA]</scope>
    <source>
        <tissue>Brain</tissue>
        <tissue>Eye</tissue>
        <tissue>Lung</tissue>
        <tissue>Muscle</tissue>
        <tissue>Placenta</tissue>
        <tissue>Skin</tissue>
    </source>
</reference>
<reference key="5">
    <citation type="submission" date="2008-12" db="UniProtKB">
        <authorList>
            <person name="Bienvenut W.V."/>
            <person name="Zebisch A."/>
            <person name="Lilla S."/>
            <person name="von Kriegsheim A."/>
            <person name="Lempens A."/>
            <person name="Kolch W."/>
        </authorList>
    </citation>
    <scope>PROTEIN SEQUENCE OF 9-24; 99-126; 140-154; 173-189 AND 285-305</scope>
    <scope>METHYLATION AT ARG-291</scope>
    <scope>IDENTIFICATION BY MASS SPECTROMETRY</scope>
    <source>
        <tissue>Colon carcinoma</tissue>
        <tissue>Ovarian carcinoma</tissue>
    </source>
</reference>
<reference key="6">
    <citation type="journal article" date="2002" name="EMBO J.">
        <title>Inhibition of SAPK2a/p38 prevents hnRNP A0 phosphorylation by MAPKAP-K2 and its interaction with cytokine mRNAs.</title>
        <authorList>
            <person name="Rousseau S."/>
            <person name="Morrice N."/>
            <person name="Peggie M."/>
            <person name="Campbell D.G."/>
            <person name="Gaestel M."/>
            <person name="Cohen P."/>
        </authorList>
    </citation>
    <scope>FUNCTION</scope>
    <scope>RNA-BINDING</scope>
</reference>
<reference key="7">
    <citation type="journal article" date="2009" name="Anal. Chem.">
        <title>Lys-N and trypsin cover complementary parts of the phosphoproteome in a refined SCX-based approach.</title>
        <authorList>
            <person name="Gauci S."/>
            <person name="Helbig A.O."/>
            <person name="Slijper M."/>
            <person name="Krijgsveld J."/>
            <person name="Heck A.J."/>
            <person name="Mohammed S."/>
        </authorList>
    </citation>
    <scope>ACETYLATION [LARGE SCALE ANALYSIS] AT MET-1</scope>
    <scope>IDENTIFICATION BY MASS SPECTROMETRY [LARGE SCALE ANALYSIS]</scope>
</reference>
<reference key="8">
    <citation type="journal article" date="2010" name="Mol. Cell">
        <title>DNA damage activates a spatially distinct late cytoplasmic cell-cycle checkpoint network controlled by MK2-mediated RNA stabilization.</title>
        <authorList>
            <person name="Reinhardt H.C."/>
            <person name="Hasskamp P."/>
            <person name="Schmedding I."/>
            <person name="Morandell S."/>
            <person name="van Vugt M.A."/>
            <person name="Wang X."/>
            <person name="Linding R."/>
            <person name="Ong S.E."/>
            <person name="Weaver D."/>
            <person name="Carr S.A."/>
            <person name="Yaffe M.B."/>
        </authorList>
    </citation>
    <scope>RNA-BINDING</scope>
    <scope>PHOSPHORYLATION AT SER-84 BY MAPKAPK2</scope>
</reference>
<reference key="9">
    <citation type="journal article" date="2011" name="BMC Syst. Biol.">
        <title>Initial characterization of the human central proteome.</title>
        <authorList>
            <person name="Burkard T.R."/>
            <person name="Planyavsky M."/>
            <person name="Kaupe I."/>
            <person name="Breitwieser F.P."/>
            <person name="Buerckstuemmer T."/>
            <person name="Bennett K.L."/>
            <person name="Superti-Furga G."/>
            <person name="Colinge J."/>
        </authorList>
    </citation>
    <scope>IDENTIFICATION BY MASS SPECTROMETRY [LARGE SCALE ANALYSIS]</scope>
</reference>
<reference key="10">
    <citation type="journal article" date="2011" name="Sci. Signal.">
        <title>System-wide temporal characterization of the proteome and phosphoproteome of human embryonic stem cell differentiation.</title>
        <authorList>
            <person name="Rigbolt K.T."/>
            <person name="Prokhorova T.A."/>
            <person name="Akimov V."/>
            <person name="Henningsen J."/>
            <person name="Johansen P.T."/>
            <person name="Kratchmarova I."/>
            <person name="Kassem M."/>
            <person name="Mann M."/>
            <person name="Olsen J.V."/>
            <person name="Blagoev B."/>
        </authorList>
    </citation>
    <scope>PHOSPHORYLATION [LARGE SCALE ANALYSIS] AT SER-188</scope>
    <scope>IDENTIFICATION BY MASS SPECTROMETRY [LARGE SCALE ANALYSIS]</scope>
</reference>
<reference key="11">
    <citation type="journal article" date="2012" name="Mol. Cell. Proteomics">
        <title>Comparative large-scale characterisation of plant vs. mammal proteins reveals similar and idiosyncratic N-alpha acetylation features.</title>
        <authorList>
            <person name="Bienvenut W.V."/>
            <person name="Sumpton D."/>
            <person name="Martinez A."/>
            <person name="Lilla S."/>
            <person name="Espagne C."/>
            <person name="Meinnel T."/>
            <person name="Giglione C."/>
        </authorList>
    </citation>
    <scope>ACETYLATION [LARGE SCALE ANALYSIS] AT MET-1</scope>
    <scope>IDENTIFICATION BY MASS SPECTROMETRY [LARGE SCALE ANALYSIS]</scope>
</reference>
<reference key="12">
    <citation type="journal article" date="2013" name="J. Proteome Res.">
        <title>Toward a comprehensive characterization of a human cancer cell phosphoproteome.</title>
        <authorList>
            <person name="Zhou H."/>
            <person name="Di Palma S."/>
            <person name="Preisinger C."/>
            <person name="Peng M."/>
            <person name="Polat A.N."/>
            <person name="Heck A.J."/>
            <person name="Mohammed S."/>
        </authorList>
    </citation>
    <scope>IDENTIFICATION BY MASS SPECTROMETRY [LARGE SCALE ANALYSIS]</scope>
    <source>
        <tissue>Erythroleukemia</tissue>
    </source>
</reference>
<reference key="13">
    <citation type="journal article" date="2014" name="J. Proteomics">
        <title>An enzyme assisted RP-RPLC approach for in-depth analysis of human liver phosphoproteome.</title>
        <authorList>
            <person name="Bian Y."/>
            <person name="Song C."/>
            <person name="Cheng K."/>
            <person name="Dong M."/>
            <person name="Wang F."/>
            <person name="Huang J."/>
            <person name="Sun D."/>
            <person name="Wang L."/>
            <person name="Ye M."/>
            <person name="Zou H."/>
        </authorList>
    </citation>
    <scope>PHOSPHORYLATION [LARGE SCALE ANALYSIS] AT SER-68</scope>
    <scope>IDENTIFICATION BY MASS SPECTROMETRY [LARGE SCALE ANALYSIS]</scope>
    <source>
        <tissue>Liver</tissue>
    </source>
</reference>
<reference key="14">
    <citation type="journal article" date="2014" name="Mol. Cell. Proteomics">
        <title>Immunoaffinity enrichment and mass spectrometry analysis of protein methylation.</title>
        <authorList>
            <person name="Guo A."/>
            <person name="Gu H."/>
            <person name="Zhou J."/>
            <person name="Mulhern D."/>
            <person name="Wang Y."/>
            <person name="Lee K.A."/>
            <person name="Yang V."/>
            <person name="Aguiar M."/>
            <person name="Kornhauser J."/>
            <person name="Jia X."/>
            <person name="Ren J."/>
            <person name="Beausoleil S.A."/>
            <person name="Silva J.C."/>
            <person name="Vemulapalli V."/>
            <person name="Bedford M.T."/>
            <person name="Comb M.J."/>
        </authorList>
    </citation>
    <scope>METHYLATION [LARGE SCALE ANALYSIS] AT ARG-139; ARG-284 AND ARG-291</scope>
    <scope>IDENTIFICATION BY MASS SPECTROMETRY [LARGE SCALE ANALYSIS]</scope>
    <source>
        <tissue>Colon carcinoma</tissue>
    </source>
</reference>
<reference key="15">
    <citation type="journal article" date="2014" name="Nat. Struct. Mol. Biol.">
        <title>Uncovering global SUMOylation signaling networks in a site-specific manner.</title>
        <authorList>
            <person name="Hendriks I.A."/>
            <person name="D'Souza R.C."/>
            <person name="Yang B."/>
            <person name="Verlaan-de Vries M."/>
            <person name="Mann M."/>
            <person name="Vertegaal A.C."/>
        </authorList>
    </citation>
    <scope>SUMOYLATION [LARGE SCALE ANALYSIS] AT LYS-172 AND LYS-176</scope>
    <scope>IDENTIFICATION BY MASS SPECTROMETRY [LARGE SCALE ANALYSIS]</scope>
</reference>
<reference key="16">
    <citation type="journal article" date="2017" name="Nat. Struct. Mol. Biol.">
        <title>Site-specific mapping of the human SUMO proteome reveals co-modification with phosphorylation.</title>
        <authorList>
            <person name="Hendriks I.A."/>
            <person name="Lyon D."/>
            <person name="Young C."/>
            <person name="Jensen L.J."/>
            <person name="Vertegaal A.C."/>
            <person name="Nielsen M.L."/>
        </authorList>
    </citation>
    <scope>SUMOYLATION [LARGE SCALE ANALYSIS] AT LYS-80; LYS-96; LYS-98; LYS-99; LYS-106; LYS-154; LYS-159 AND LYS-176</scope>
    <scope>IDENTIFICATION BY MASS SPECTROMETRY [LARGE SCALE ANALYSIS]</scope>
</reference>
<accession>Q13151</accession>
<accession>Q6IB18</accession>
<protein>
    <recommendedName>
        <fullName>Heterogeneous nuclear ribonucleoprotein A0</fullName>
        <shortName>hnRNP A0</shortName>
    </recommendedName>
</protein>
<proteinExistence type="evidence at protein level"/>
<evidence type="ECO:0000250" key="1"/>
<evidence type="ECO:0000250" key="2">
    <source>
        <dbReference type="UniProtKB" id="Q9CX86"/>
    </source>
</evidence>
<evidence type="ECO:0000255" key="3">
    <source>
        <dbReference type="PROSITE-ProRule" id="PRU00176"/>
    </source>
</evidence>
<evidence type="ECO:0000256" key="4">
    <source>
        <dbReference type="SAM" id="MobiDB-lite"/>
    </source>
</evidence>
<evidence type="ECO:0000269" key="5">
    <source>
    </source>
</evidence>
<evidence type="ECO:0000269" key="6">
    <source>
    </source>
</evidence>
<evidence type="ECO:0000269" key="7">
    <source ref="5"/>
</evidence>
<evidence type="ECO:0007744" key="8">
    <source>
    </source>
</evidence>
<evidence type="ECO:0007744" key="9">
    <source>
    </source>
</evidence>
<evidence type="ECO:0007744" key="10">
    <source>
    </source>
</evidence>
<evidence type="ECO:0007744" key="11">
    <source>
    </source>
</evidence>
<evidence type="ECO:0007744" key="12">
    <source>
    </source>
</evidence>
<evidence type="ECO:0007744" key="13">
    <source>
    </source>
</evidence>
<evidence type="ECO:0007744" key="14">
    <source>
    </source>
</evidence>
<feature type="chain" id="PRO_0000081826" description="Heterogeneous nuclear ribonucleoprotein A0">
    <location>
        <begin position="1"/>
        <end position="305"/>
    </location>
</feature>
<feature type="domain" description="RRM 1" evidence="3">
    <location>
        <begin position="7"/>
        <end position="86"/>
    </location>
</feature>
<feature type="domain" description="RRM 2" evidence="3">
    <location>
        <begin position="98"/>
        <end position="175"/>
    </location>
</feature>
<feature type="region of interest" description="Disordered" evidence="4">
    <location>
        <begin position="174"/>
        <end position="214"/>
    </location>
</feature>
<feature type="region of interest" description="Disordered" evidence="4">
    <location>
        <begin position="262"/>
        <end position="305"/>
    </location>
</feature>
<feature type="compositionally biased region" description="Gly residues" evidence="4">
    <location>
        <begin position="181"/>
        <end position="200"/>
    </location>
</feature>
<feature type="compositionally biased region" description="Gly residues" evidence="4">
    <location>
        <begin position="269"/>
        <end position="281"/>
    </location>
</feature>
<feature type="compositionally biased region" description="Gly residues" evidence="4">
    <location>
        <begin position="290"/>
        <end position="305"/>
    </location>
</feature>
<feature type="modified residue" description="N-acetylmethionine" evidence="8 10">
    <location>
        <position position="1"/>
    </location>
</feature>
<feature type="modified residue" description="Phosphoserine" evidence="12">
    <location>
        <position position="68"/>
    </location>
</feature>
<feature type="modified residue" description="Phosphoserine; by MAPKAPK2" evidence="6">
    <location>
        <position position="84"/>
    </location>
</feature>
<feature type="modified residue" description="N6-acetyllysine" evidence="2">
    <location>
        <position position="133"/>
    </location>
</feature>
<feature type="modified residue" description="Omega-N-methylarginine" evidence="11">
    <location>
        <position position="139"/>
    </location>
</feature>
<feature type="modified residue" description="Phosphoserine" evidence="9">
    <location>
        <position position="188"/>
    </location>
</feature>
<feature type="modified residue" description="Omega-N-methylarginine" evidence="11">
    <location>
        <position position="284"/>
    </location>
</feature>
<feature type="modified residue" description="Asymmetric dimethylarginine; alternate" evidence="11">
    <location>
        <position position="291"/>
    </location>
</feature>
<feature type="modified residue" description="Dimethylated arginine; alternate" evidence="7">
    <location>
        <position position="291"/>
    </location>
</feature>
<feature type="modified residue" description="Omega-N-methylarginine; alternate" evidence="11">
    <location>
        <position position="291"/>
    </location>
</feature>
<feature type="cross-link" description="Glycyl lysine isopeptide (Lys-Gly) (interchain with G-Cter in SUMO2)" evidence="14">
    <location>
        <position position="80"/>
    </location>
</feature>
<feature type="cross-link" description="Glycyl lysine isopeptide (Lys-Gly) (interchain with G-Cter in SUMO2)" evidence="14">
    <location>
        <position position="96"/>
    </location>
</feature>
<feature type="cross-link" description="Glycyl lysine isopeptide (Lys-Gly) (interchain with G-Cter in SUMO2)" evidence="14">
    <location>
        <position position="98"/>
    </location>
</feature>
<feature type="cross-link" description="Glycyl lysine isopeptide (Lys-Gly) (interchain with G-Cter in SUMO2)" evidence="14">
    <location>
        <position position="99"/>
    </location>
</feature>
<feature type="cross-link" description="Glycyl lysine isopeptide (Lys-Gly) (interchain with G-Cter in SUMO2)" evidence="14">
    <location>
        <position position="106"/>
    </location>
</feature>
<feature type="cross-link" description="Glycyl lysine isopeptide (Lys-Gly) (interchain with G-Cter in SUMO2)" evidence="14">
    <location>
        <position position="154"/>
    </location>
</feature>
<feature type="cross-link" description="Glycyl lysine isopeptide (Lys-Gly) (interchain with G-Cter in SUMO2)" evidence="14">
    <location>
        <position position="159"/>
    </location>
</feature>
<feature type="cross-link" description="Glycyl lysine isopeptide (Lys-Gly) (interchain with G-Cter in SUMO2)" evidence="13">
    <location>
        <position position="172"/>
    </location>
</feature>
<feature type="cross-link" description="Glycyl lysine isopeptide (Lys-Gly) (interchain with G-Cter in SUMO2)" evidence="13 14">
    <location>
        <position position="176"/>
    </location>
</feature>
<gene>
    <name type="primary">HNRNPA0</name>
    <name type="synonym">HNRPA0</name>
</gene>